<protein>
    <recommendedName>
        <fullName evidence="1">Ribonuclease PH</fullName>
        <shortName evidence="1">RNase PH</shortName>
        <ecNumber evidence="1">2.7.7.56</ecNumber>
    </recommendedName>
    <alternativeName>
        <fullName evidence="1">tRNA nucleotidyltransferase</fullName>
    </alternativeName>
</protein>
<organism>
    <name type="scientific">Salmonella arizonae (strain ATCC BAA-731 / CDC346-86 / RSK2980)</name>
    <dbReference type="NCBI Taxonomy" id="41514"/>
    <lineage>
        <taxon>Bacteria</taxon>
        <taxon>Pseudomonadati</taxon>
        <taxon>Pseudomonadota</taxon>
        <taxon>Gammaproteobacteria</taxon>
        <taxon>Enterobacterales</taxon>
        <taxon>Enterobacteriaceae</taxon>
        <taxon>Salmonella</taxon>
    </lineage>
</organism>
<feature type="chain" id="PRO_1000082301" description="Ribonuclease PH">
    <location>
        <begin position="1"/>
        <end position="238"/>
    </location>
</feature>
<feature type="binding site" evidence="1">
    <location>
        <position position="86"/>
    </location>
    <ligand>
        <name>phosphate</name>
        <dbReference type="ChEBI" id="CHEBI:43474"/>
        <note>substrate</note>
    </ligand>
</feature>
<feature type="binding site" evidence="1">
    <location>
        <begin position="124"/>
        <end position="126"/>
    </location>
    <ligand>
        <name>phosphate</name>
        <dbReference type="ChEBI" id="CHEBI:43474"/>
        <note>substrate</note>
    </ligand>
</feature>
<reference key="1">
    <citation type="submission" date="2007-11" db="EMBL/GenBank/DDBJ databases">
        <authorList>
            <consortium name="The Salmonella enterica serovar Arizonae Genome Sequencing Project"/>
            <person name="McClelland M."/>
            <person name="Sanderson E.K."/>
            <person name="Porwollik S."/>
            <person name="Spieth J."/>
            <person name="Clifton W.S."/>
            <person name="Fulton R."/>
            <person name="Chunyan W."/>
            <person name="Wollam A."/>
            <person name="Shah N."/>
            <person name="Pepin K."/>
            <person name="Bhonagiri V."/>
            <person name="Nash W."/>
            <person name="Johnson M."/>
            <person name="Thiruvilangam P."/>
            <person name="Wilson R."/>
        </authorList>
    </citation>
    <scope>NUCLEOTIDE SEQUENCE [LARGE SCALE GENOMIC DNA]</scope>
    <source>
        <strain>ATCC BAA-731 / CDC346-86 / RSK2980</strain>
    </source>
</reference>
<name>RNPH_SALAR</name>
<gene>
    <name evidence="1" type="primary">rph</name>
    <name type="ordered locus">SARI_03907</name>
</gene>
<comment type="function">
    <text evidence="1">Phosphorolytic 3'-5' exoribonuclease that plays an important role in tRNA 3'-end maturation. Removes nucleotide residues following the 3'-CCA terminus of tRNAs; can also add nucleotides to the ends of RNA molecules by using nucleoside diphosphates as substrates, but this may not be physiologically important. Probably plays a role in initiation of 16S rRNA degradation (leading to ribosome degradation) during starvation.</text>
</comment>
<comment type="catalytic activity">
    <reaction evidence="1">
        <text>tRNA(n+1) + phosphate = tRNA(n) + a ribonucleoside 5'-diphosphate</text>
        <dbReference type="Rhea" id="RHEA:10628"/>
        <dbReference type="Rhea" id="RHEA-COMP:17343"/>
        <dbReference type="Rhea" id="RHEA-COMP:17344"/>
        <dbReference type="ChEBI" id="CHEBI:43474"/>
        <dbReference type="ChEBI" id="CHEBI:57930"/>
        <dbReference type="ChEBI" id="CHEBI:173114"/>
        <dbReference type="EC" id="2.7.7.56"/>
    </reaction>
</comment>
<comment type="subunit">
    <text evidence="1">Homohexameric ring arranged as a trimer of dimers.</text>
</comment>
<comment type="similarity">
    <text evidence="1">Belongs to the RNase PH family.</text>
</comment>
<proteinExistence type="inferred from homology"/>
<sequence length="238" mass="25269">MRPAGRSANQVRPVTLTRNYTKHAEGSVLVEFGDTKVLCTASIEEGVPRFLKGQGQGWITAEYGMLPRATHTRNAREAAKGKQGGRTMEIQRLIARALRAAVDLKTLGEFTITLDCDVIQADGGTRTASITGACVALADALNKLVANGKLKTNPMKGMVAAVSVGIVNGEAICDLEYVEDSAAETDMNVVMTEDGRIIEVQGTAEGEPFSHEELLTLLALARGGIESIVATQKAALEN</sequence>
<dbReference type="EC" id="2.7.7.56" evidence="1"/>
<dbReference type="EMBL" id="CP000880">
    <property type="protein sequence ID" value="ABX23701.1"/>
    <property type="molecule type" value="Genomic_DNA"/>
</dbReference>
<dbReference type="SMR" id="A9MKN2"/>
<dbReference type="STRING" id="41514.SARI_03907"/>
<dbReference type="KEGG" id="ses:SARI_03907"/>
<dbReference type="HOGENOM" id="CLU_050858_0_0_6"/>
<dbReference type="Proteomes" id="UP000002084">
    <property type="component" value="Chromosome"/>
</dbReference>
<dbReference type="GO" id="GO:0000175">
    <property type="term" value="F:3'-5'-RNA exonuclease activity"/>
    <property type="evidence" value="ECO:0007669"/>
    <property type="project" value="UniProtKB-UniRule"/>
</dbReference>
<dbReference type="GO" id="GO:0000049">
    <property type="term" value="F:tRNA binding"/>
    <property type="evidence" value="ECO:0007669"/>
    <property type="project" value="UniProtKB-UniRule"/>
</dbReference>
<dbReference type="GO" id="GO:0009022">
    <property type="term" value="F:tRNA nucleotidyltransferase activity"/>
    <property type="evidence" value="ECO:0007669"/>
    <property type="project" value="UniProtKB-UniRule"/>
</dbReference>
<dbReference type="GO" id="GO:0016075">
    <property type="term" value="P:rRNA catabolic process"/>
    <property type="evidence" value="ECO:0007669"/>
    <property type="project" value="UniProtKB-UniRule"/>
</dbReference>
<dbReference type="GO" id="GO:0006364">
    <property type="term" value="P:rRNA processing"/>
    <property type="evidence" value="ECO:0007669"/>
    <property type="project" value="UniProtKB-KW"/>
</dbReference>
<dbReference type="GO" id="GO:0008033">
    <property type="term" value="P:tRNA processing"/>
    <property type="evidence" value="ECO:0007669"/>
    <property type="project" value="UniProtKB-UniRule"/>
</dbReference>
<dbReference type="CDD" id="cd11362">
    <property type="entry name" value="RNase_PH_bact"/>
    <property type="match status" value="1"/>
</dbReference>
<dbReference type="FunFam" id="3.30.230.70:FF:000003">
    <property type="entry name" value="Ribonuclease PH"/>
    <property type="match status" value="1"/>
</dbReference>
<dbReference type="Gene3D" id="3.30.230.70">
    <property type="entry name" value="GHMP Kinase, N-terminal domain"/>
    <property type="match status" value="1"/>
</dbReference>
<dbReference type="HAMAP" id="MF_00564">
    <property type="entry name" value="RNase_PH"/>
    <property type="match status" value="1"/>
</dbReference>
<dbReference type="InterPro" id="IPR001247">
    <property type="entry name" value="ExoRNase_PH_dom1"/>
</dbReference>
<dbReference type="InterPro" id="IPR015847">
    <property type="entry name" value="ExoRNase_PH_dom2"/>
</dbReference>
<dbReference type="InterPro" id="IPR036345">
    <property type="entry name" value="ExoRNase_PH_dom2_sf"/>
</dbReference>
<dbReference type="InterPro" id="IPR027408">
    <property type="entry name" value="PNPase/RNase_PH_dom_sf"/>
</dbReference>
<dbReference type="InterPro" id="IPR020568">
    <property type="entry name" value="Ribosomal_Su5_D2-typ_SF"/>
</dbReference>
<dbReference type="InterPro" id="IPR050080">
    <property type="entry name" value="RNase_PH"/>
</dbReference>
<dbReference type="InterPro" id="IPR002381">
    <property type="entry name" value="RNase_PH_bac-type"/>
</dbReference>
<dbReference type="InterPro" id="IPR018336">
    <property type="entry name" value="RNase_PH_CS"/>
</dbReference>
<dbReference type="NCBIfam" id="TIGR01966">
    <property type="entry name" value="RNasePH"/>
    <property type="match status" value="1"/>
</dbReference>
<dbReference type="PANTHER" id="PTHR11953">
    <property type="entry name" value="EXOSOME COMPLEX COMPONENT"/>
    <property type="match status" value="1"/>
</dbReference>
<dbReference type="PANTHER" id="PTHR11953:SF0">
    <property type="entry name" value="EXOSOME COMPLEX COMPONENT RRP41"/>
    <property type="match status" value="1"/>
</dbReference>
<dbReference type="Pfam" id="PF01138">
    <property type="entry name" value="RNase_PH"/>
    <property type="match status" value="1"/>
</dbReference>
<dbReference type="Pfam" id="PF03725">
    <property type="entry name" value="RNase_PH_C"/>
    <property type="match status" value="1"/>
</dbReference>
<dbReference type="SUPFAM" id="SSF55666">
    <property type="entry name" value="Ribonuclease PH domain 2-like"/>
    <property type="match status" value="1"/>
</dbReference>
<dbReference type="SUPFAM" id="SSF54211">
    <property type="entry name" value="Ribosomal protein S5 domain 2-like"/>
    <property type="match status" value="1"/>
</dbReference>
<dbReference type="PROSITE" id="PS01277">
    <property type="entry name" value="RIBONUCLEASE_PH"/>
    <property type="match status" value="1"/>
</dbReference>
<accession>A9MKN2</accession>
<evidence type="ECO:0000255" key="1">
    <source>
        <dbReference type="HAMAP-Rule" id="MF_00564"/>
    </source>
</evidence>
<keyword id="KW-0548">Nucleotidyltransferase</keyword>
<keyword id="KW-1185">Reference proteome</keyword>
<keyword id="KW-0694">RNA-binding</keyword>
<keyword id="KW-0698">rRNA processing</keyword>
<keyword id="KW-0808">Transferase</keyword>
<keyword id="KW-0819">tRNA processing</keyword>
<keyword id="KW-0820">tRNA-binding</keyword>